<feature type="signal peptide" evidence="2">
    <location>
        <begin position="1"/>
        <end position="22"/>
    </location>
</feature>
<feature type="chain" id="PRO_0000344524" description="Protein phosphatase 2C 16">
    <location>
        <begin position="23"/>
        <end position="511"/>
    </location>
</feature>
<feature type="domain" description="PPM-type phosphatase" evidence="3">
    <location>
        <begin position="189"/>
        <end position="501"/>
    </location>
</feature>
<feature type="binding site" evidence="13 19">
    <location>
        <position position="243"/>
    </location>
    <ligand>
        <name>Mn(2+)</name>
        <dbReference type="ChEBI" id="CHEBI:29035"/>
        <label>1</label>
    </ligand>
</feature>
<feature type="binding site" evidence="14 20 21 22 23 24 25 26 27 28">
    <location>
        <position position="243"/>
    </location>
    <ligand>
        <name>Mn(2+)</name>
        <dbReference type="ChEBI" id="CHEBI:29035"/>
        <label>2</label>
    </ligand>
</feature>
<feature type="binding site" evidence="13 19">
    <location>
        <position position="244"/>
    </location>
    <ligand>
        <name>Mn(2+)</name>
        <dbReference type="ChEBI" id="CHEBI:29035"/>
        <label>1</label>
    </ligand>
</feature>
<feature type="binding site" evidence="14 20 21 22 23 24 25 26 27 28">
    <location>
        <position position="432"/>
    </location>
    <ligand>
        <name>Mn(2+)</name>
        <dbReference type="ChEBI" id="CHEBI:29035"/>
        <label>2</label>
    </ligand>
</feature>
<feature type="binding site" evidence="14 20 21 22 23 24 25 26 27 28">
    <location>
        <position position="492"/>
    </location>
    <ligand>
        <name>Mn(2+)</name>
        <dbReference type="ChEBI" id="CHEBI:29035"/>
        <label>2</label>
    </ligand>
</feature>
<feature type="site" description="Lock">
    <location>
        <position position="385"/>
    </location>
</feature>
<feature type="splice variant" id="VSP_034844" description="In isoform 2." evidence="17">
    <original>DRYLK</original>
    <variation>KHCFF</variation>
    <location>
        <begin position="402"/>
        <end position="406"/>
    </location>
</feature>
<feature type="splice variant" id="VSP_034845" description="In isoform 2." evidence="17">
    <location>
        <begin position="407"/>
        <end position="511"/>
    </location>
</feature>
<feature type="mutagenesis site" description="Reduced phosphatase activity, impaired affinity for PYR/PYL/RCAR receptors, and insensitivity to ABA." evidence="7 9 12">
    <original>G</original>
    <variation>D</variation>
    <location>
        <position position="246"/>
    </location>
</feature>
<feature type="sequence conflict" description="In Ref. 1; CAA05875." evidence="18" ref="1">
    <original>Q</original>
    <variation>P</variation>
    <location>
        <position position="46"/>
    </location>
</feature>
<feature type="helix" evidence="29">
    <location>
        <begin position="181"/>
        <end position="183"/>
    </location>
</feature>
<feature type="strand" evidence="33">
    <location>
        <begin position="190"/>
        <end position="195"/>
    </location>
</feature>
<feature type="strand" evidence="33">
    <location>
        <begin position="199"/>
        <end position="201"/>
    </location>
</feature>
<feature type="strand" evidence="33">
    <location>
        <begin position="204"/>
        <end position="216"/>
    </location>
</feature>
<feature type="helix" evidence="33">
    <location>
        <begin position="217"/>
        <end position="220"/>
    </location>
</feature>
<feature type="strand" evidence="33">
    <location>
        <begin position="233"/>
        <end position="248"/>
    </location>
</feature>
<feature type="helix" evidence="33">
    <location>
        <begin position="249"/>
        <end position="268"/>
    </location>
</feature>
<feature type="turn" evidence="30">
    <location>
        <begin position="269"/>
        <end position="271"/>
    </location>
</feature>
<feature type="helix" evidence="33">
    <location>
        <begin position="283"/>
        <end position="301"/>
    </location>
</feature>
<feature type="strand" evidence="31">
    <location>
        <begin position="303"/>
        <end position="305"/>
    </location>
</feature>
<feature type="strand" evidence="31">
    <location>
        <begin position="310"/>
        <end position="312"/>
    </location>
</feature>
<feature type="helix" evidence="32">
    <location>
        <begin position="314"/>
        <end position="322"/>
    </location>
</feature>
<feature type="strand" evidence="33">
    <location>
        <begin position="329"/>
        <end position="334"/>
    </location>
</feature>
<feature type="strand" evidence="33">
    <location>
        <begin position="336"/>
        <end position="346"/>
    </location>
</feature>
<feature type="strand" evidence="33">
    <location>
        <begin position="348"/>
        <end position="353"/>
    </location>
</feature>
<feature type="strand" evidence="33">
    <location>
        <begin position="356"/>
        <end position="361"/>
    </location>
</feature>
<feature type="helix" evidence="33">
    <location>
        <begin position="369"/>
        <end position="377"/>
    </location>
</feature>
<feature type="strand" evidence="33">
    <location>
        <begin position="382"/>
        <end position="390"/>
    </location>
</feature>
<feature type="turn" evidence="33">
    <location>
        <begin position="391"/>
        <end position="393"/>
    </location>
</feature>
<feature type="helix" evidence="33">
    <location>
        <begin position="403"/>
        <end position="405"/>
    </location>
</feature>
<feature type="turn" evidence="33">
    <location>
        <begin position="406"/>
        <end position="408"/>
    </location>
</feature>
<feature type="strand" evidence="33">
    <location>
        <begin position="414"/>
        <end position="419"/>
    </location>
</feature>
<feature type="strand" evidence="33">
    <location>
        <begin position="424"/>
        <end position="430"/>
    </location>
</feature>
<feature type="helix" evidence="33">
    <location>
        <begin position="432"/>
        <end position="435"/>
    </location>
</feature>
<feature type="helix" evidence="33">
    <location>
        <begin position="440"/>
        <end position="458"/>
    </location>
</feature>
<feature type="turn" evidence="33">
    <location>
        <begin position="463"/>
        <end position="467"/>
    </location>
</feature>
<feature type="helix" evidence="33">
    <location>
        <begin position="472"/>
        <end position="487"/>
    </location>
</feature>
<feature type="strand" evidence="33">
    <location>
        <begin position="494"/>
        <end position="500"/>
    </location>
</feature>
<reference key="1">
    <citation type="journal article" date="1998" name="Plant Mol. Biol.">
        <title>Molecular cloning in Arabidopsis thaliana of a new protein phosphatase 2C (PP2C) with homology to ABI1 and ABI2.</title>
        <authorList>
            <person name="Rodriguez P.L."/>
            <person name="Leube M.P."/>
            <person name="Grill E."/>
        </authorList>
    </citation>
    <scope>NUCLEOTIDE SEQUENCE [GENOMIC DNA] (ISOFORM 1)</scope>
    <scope>TISSUE SPECIFICITY</scope>
    <scope>INDUCTION BY ABA</scope>
    <source>
        <strain>cv. Landsberg erecta</strain>
    </source>
</reference>
<reference key="2">
    <citation type="journal article" date="2000" name="Nature">
        <title>Sequence and analysis of chromosome 1 of the plant Arabidopsis thaliana.</title>
        <authorList>
            <person name="Theologis A."/>
            <person name="Ecker J.R."/>
            <person name="Palm C.J."/>
            <person name="Federspiel N.A."/>
            <person name="Kaul S."/>
            <person name="White O."/>
            <person name="Alonso J."/>
            <person name="Altafi H."/>
            <person name="Araujo R."/>
            <person name="Bowman C.L."/>
            <person name="Brooks S.Y."/>
            <person name="Buehler E."/>
            <person name="Chan A."/>
            <person name="Chao Q."/>
            <person name="Chen H."/>
            <person name="Cheuk R.F."/>
            <person name="Chin C.W."/>
            <person name="Chung M.K."/>
            <person name="Conn L."/>
            <person name="Conway A.B."/>
            <person name="Conway A.R."/>
            <person name="Creasy T.H."/>
            <person name="Dewar K."/>
            <person name="Dunn P."/>
            <person name="Etgu P."/>
            <person name="Feldblyum T.V."/>
            <person name="Feng J.-D."/>
            <person name="Fong B."/>
            <person name="Fujii C.Y."/>
            <person name="Gill J.E."/>
            <person name="Goldsmith A.D."/>
            <person name="Haas B."/>
            <person name="Hansen N.F."/>
            <person name="Hughes B."/>
            <person name="Huizar L."/>
            <person name="Hunter J.L."/>
            <person name="Jenkins J."/>
            <person name="Johnson-Hopson C."/>
            <person name="Khan S."/>
            <person name="Khaykin E."/>
            <person name="Kim C.J."/>
            <person name="Koo H.L."/>
            <person name="Kremenetskaia I."/>
            <person name="Kurtz D.B."/>
            <person name="Kwan A."/>
            <person name="Lam B."/>
            <person name="Langin-Hooper S."/>
            <person name="Lee A."/>
            <person name="Lee J.M."/>
            <person name="Lenz C.A."/>
            <person name="Li J.H."/>
            <person name="Li Y.-P."/>
            <person name="Lin X."/>
            <person name="Liu S.X."/>
            <person name="Liu Z.A."/>
            <person name="Luros J.S."/>
            <person name="Maiti R."/>
            <person name="Marziali A."/>
            <person name="Militscher J."/>
            <person name="Miranda M."/>
            <person name="Nguyen M."/>
            <person name="Nierman W.C."/>
            <person name="Osborne B.I."/>
            <person name="Pai G."/>
            <person name="Peterson J."/>
            <person name="Pham P.K."/>
            <person name="Rizzo M."/>
            <person name="Rooney T."/>
            <person name="Rowley D."/>
            <person name="Sakano H."/>
            <person name="Salzberg S.L."/>
            <person name="Schwartz J.R."/>
            <person name="Shinn P."/>
            <person name="Southwick A.M."/>
            <person name="Sun H."/>
            <person name="Tallon L.J."/>
            <person name="Tambunga G."/>
            <person name="Toriumi M.J."/>
            <person name="Town C.D."/>
            <person name="Utterback T."/>
            <person name="Van Aken S."/>
            <person name="Vaysberg M."/>
            <person name="Vysotskaia V.S."/>
            <person name="Walker M."/>
            <person name="Wu D."/>
            <person name="Yu G."/>
            <person name="Fraser C.M."/>
            <person name="Venter J.C."/>
            <person name="Davis R.W."/>
        </authorList>
    </citation>
    <scope>NUCLEOTIDE SEQUENCE [LARGE SCALE GENOMIC DNA]</scope>
    <source>
        <strain>cv. Columbia</strain>
    </source>
</reference>
<reference key="3">
    <citation type="journal article" date="2017" name="Plant J.">
        <title>Araport11: a complete reannotation of the Arabidopsis thaliana reference genome.</title>
        <authorList>
            <person name="Cheng C.Y."/>
            <person name="Krishnakumar V."/>
            <person name="Chan A.P."/>
            <person name="Thibaud-Nissen F."/>
            <person name="Schobel S."/>
            <person name="Town C.D."/>
        </authorList>
    </citation>
    <scope>GENOME REANNOTATION</scope>
    <source>
        <strain>cv. Columbia</strain>
    </source>
</reference>
<reference key="4">
    <citation type="submission" date="2004-08" db="EMBL/GenBank/DDBJ databases">
        <title>Arabidopsis ORF clones.</title>
        <authorList>
            <person name="Cheuk R.F."/>
            <person name="Chen H."/>
            <person name="Kim C.J."/>
            <person name="Shinn P."/>
            <person name="Ecker J.R."/>
        </authorList>
    </citation>
    <scope>NUCLEOTIDE SEQUENCE [LARGE SCALE MRNA] (ISOFORM 1)</scope>
    <source>
        <strain>cv. Columbia</strain>
    </source>
</reference>
<reference key="5">
    <citation type="submission" date="2006-07" db="EMBL/GenBank/DDBJ databases">
        <title>Large-scale analysis of RIKEN Arabidopsis full-length (RAFL) cDNAs.</title>
        <authorList>
            <person name="Totoki Y."/>
            <person name="Seki M."/>
            <person name="Ishida J."/>
            <person name="Nakajima M."/>
            <person name="Enju A."/>
            <person name="Kamiya A."/>
            <person name="Narusaka M."/>
            <person name="Shin-i T."/>
            <person name="Nakagawa M."/>
            <person name="Sakamoto N."/>
            <person name="Oishi K."/>
            <person name="Kohara Y."/>
            <person name="Kobayashi M."/>
            <person name="Toyoda A."/>
            <person name="Sakaki Y."/>
            <person name="Sakurai T."/>
            <person name="Iida K."/>
            <person name="Akiyama K."/>
            <person name="Satou M."/>
            <person name="Toyoda T."/>
            <person name="Konagaya A."/>
            <person name="Carninci P."/>
            <person name="Kawai J."/>
            <person name="Hayashizaki Y."/>
            <person name="Shinozaki K."/>
        </authorList>
    </citation>
    <scope>NUCLEOTIDE SEQUENCE [LARGE SCALE MRNA] (ISOFORM 2)</scope>
    <source>
        <strain>cv. Columbia</strain>
    </source>
</reference>
<reference key="6">
    <citation type="journal article" date="2009" name="DNA Res.">
        <title>Analysis of multiple occurrences of alternative splicing events in Arabidopsis thaliana using novel sequenced full-length cDNAs.</title>
        <authorList>
            <person name="Iida K."/>
            <person name="Fukami-Kobayashi K."/>
            <person name="Toyoda A."/>
            <person name="Sakaki Y."/>
            <person name="Kobayashi M."/>
            <person name="Seki M."/>
            <person name="Shinozaki K."/>
        </authorList>
    </citation>
    <scope>NUCLEOTIDE SEQUENCE [LARGE SCALE MRNA] OF 148-511 (ISOFORM 1)</scope>
    <source>
        <tissue>Rosette leaf</tissue>
    </source>
</reference>
<reference key="7">
    <citation type="journal article" date="2004" name="Plant J.">
        <title>Gain-of-function and loss-of-function phenotypes of the protein phosphatase 2C HAB1 reveal its role as a negative regulator of abscisic acid signalling.</title>
        <authorList>
            <person name="Saez A."/>
            <person name="Apostolova N."/>
            <person name="Gonzalez-Guzman M."/>
            <person name="Gonzalez-Garcia M.P."/>
            <person name="Nicolas C."/>
            <person name="Lorenzo O."/>
            <person name="Rodriguez P.L."/>
        </authorList>
    </citation>
    <scope>FUNCTION</scope>
    <scope>TISSUE SPECIFICITY</scope>
    <scope>INDUCTION BY ABA</scope>
</reference>
<reference key="8">
    <citation type="journal article" date="2004" name="Trends Plant Sci.">
        <title>Plant PP2C phosphatases: emerging functions in stress signaling.</title>
        <authorList>
            <person name="Schweighofer A."/>
            <person name="Hirt H."/>
            <person name="Meskiene I."/>
        </authorList>
    </citation>
    <scope>GENE FAMILY</scope>
    <scope>NOMENCLATURE</scope>
</reference>
<reference key="9">
    <citation type="journal article" date="2006" name="FEBS Lett.">
        <title>A hypermorphic mutation in the protein phosphatase 2C HAB1 strongly affects ABA signaling in Arabidopsis.</title>
        <authorList>
            <person name="Robert N."/>
            <person name="Merlot S."/>
            <person name="N'guyen V."/>
            <person name="Boisson-Dernier A."/>
            <person name="Schroeder J.I."/>
        </authorList>
    </citation>
    <scope>FUNCTION</scope>
    <scope>MUTAGENESIS OF GLY-246</scope>
</reference>
<reference key="10">
    <citation type="journal article" date="2006" name="Plant Physiol.">
        <title>ABA-hypersensitive germination3 encodes a protein phosphatase 2C (AtPP2CA) that strongly regulates abscisic acid signaling during germination among Arabidopsis protein phosphatase 2Cs.</title>
        <authorList>
            <person name="Yoshida T."/>
            <person name="Nishimura N."/>
            <person name="Kitahata N."/>
            <person name="Kuromori T."/>
            <person name="Ito T."/>
            <person name="Asami T."/>
            <person name="Shinozaki K."/>
            <person name="Hirayama T."/>
        </authorList>
    </citation>
    <scope>INDUCTION BY ABA</scope>
    <scope>TISSUE SPECIFICITY</scope>
</reference>
<reference key="11">
    <citation type="journal article" date="2006" name="Plant Physiol.">
        <title>Enhancement of abscisic acid sensitivity and reduction of water consumption in Arabidopsis by combined inactivation of the protein phosphatases type 2C ABI1 and HAB1.</title>
        <authorList>
            <person name="Saez A."/>
            <person name="Robert N."/>
            <person name="Maktabi M.H."/>
            <person name="Schroeder J.I."/>
            <person name="Serrano R."/>
            <person name="Rodriguez P.L."/>
        </authorList>
    </citation>
    <scope>FUNCTION</scope>
</reference>
<reference key="12">
    <citation type="journal article" date="2008" name="BMC Genomics">
        <title>Genome-wide and expression analysis of protein phosphatase 2C in rice and Arabidopsis.</title>
        <authorList>
            <person name="Xue T."/>
            <person name="Wang D."/>
            <person name="Zhang S."/>
            <person name="Ehlting J."/>
            <person name="Ni F."/>
            <person name="Jacab S."/>
            <person name="Zheng C."/>
            <person name="Zhong Y."/>
        </authorList>
    </citation>
    <scope>GENE FAMILY</scope>
    <scope>NOMENCLATURE</scope>
</reference>
<reference key="13">
    <citation type="journal article" date="2008" name="Plant Cell">
        <title>HAB1-SWI3B interaction reveals a link between abscisic acid signaling and putative SWI/SNF chromatin-remodeling complexes in Arabidopsis.</title>
        <authorList>
            <person name="Saez A."/>
            <person name="Rodrigues A."/>
            <person name="Santiago J."/>
            <person name="Rubio S."/>
            <person name="Rodriguez P.L."/>
        </authorList>
    </citation>
    <scope>FUNCTION</scope>
    <scope>SUBCELLULAR LOCATION</scope>
    <scope>INTERACTION WITH SWI3B</scope>
    <scope>MUTAGENESIS OF GLY-246</scope>
</reference>
<reference key="14">
    <citation type="journal article" date="2008" name="Plant Physiol.">
        <title>Overexpression of AtMYB44 enhances stomatal closure to confer abiotic stress tolerance in transgenic Arabidopsis.</title>
        <authorList>
            <person name="Jung C."/>
            <person name="Seo J.S."/>
            <person name="Han S.W."/>
            <person name="Koo Y.J."/>
            <person name="Kim C.H."/>
            <person name="Song S.I."/>
            <person name="Nahm B.H."/>
            <person name="Choi Y.D."/>
            <person name="Cheong J.-J."/>
        </authorList>
    </citation>
    <scope>INDUCTION BY MYB44</scope>
</reference>
<reference key="15">
    <citation type="journal article" date="2009" name="Plant J.">
        <title>Modulation of drought resistance by the abscisic acid receptor PYL5 through inhibition of clade A PP2Cs.</title>
        <authorList>
            <person name="Santiago J."/>
            <person name="Rodrigues A."/>
            <person name="Saez A."/>
            <person name="Rubio S."/>
            <person name="Antoni R."/>
            <person name="Dupeux F."/>
            <person name="Park S.-Y."/>
            <person name="Marquez J.A."/>
            <person name="Cutler S.R."/>
            <person name="Rodriguez P.L."/>
        </authorList>
    </citation>
    <scope>INTERACTION WITH PYL5; PYL6 AND PYL8</scope>
    <scope>MUTAGENESIS OF GLY-246</scope>
</reference>
<reference key="16">
    <citation type="journal article" date="2009" name="Science">
        <title>Regulators of PP2C phosphatase activity function as abscisic acid sensors.</title>
        <authorList>
            <person name="Ma Y."/>
            <person name="Szostkiewicz I."/>
            <person name="Korte A."/>
            <person name="Moes D."/>
            <person name="Yang Y."/>
            <person name="Christmann A."/>
            <person name="Grill E."/>
        </authorList>
    </citation>
    <scope>INTERACTION WITH PYL9/RCAR1</scope>
</reference>
<reference key="17">
    <citation type="journal article" date="2009" name="Science">
        <title>Abscisic acid inhibits type 2C protein phosphatases via the PYR/PYL family of START proteins.</title>
        <authorList>
            <person name="Park S.-Y."/>
            <person name="Fung P."/>
            <person name="Nishimura N."/>
            <person name="Jensen D.R."/>
            <person name="Fujii H."/>
            <person name="Zhao Y."/>
            <person name="Lumba S."/>
            <person name="Santiago J."/>
            <person name="Rodrigues A."/>
            <person name="Chow T.F."/>
            <person name="Alfred S.E."/>
            <person name="Bonetta D."/>
            <person name="Finkelstein R."/>
            <person name="Provart N.J."/>
            <person name="Desveaux D."/>
            <person name="Rodriguez P.L."/>
            <person name="McCourt P."/>
            <person name="Zhu J.-K."/>
            <person name="Schroeder J.I."/>
            <person name="Volkman B.F."/>
            <person name="Cutler S.R."/>
        </authorList>
    </citation>
    <scope>INTERACTION WITH PYR1; PYL1; PYL2; PYL3 AND PYL4</scope>
    <scope>ACTIVITY REGULATION</scope>
</reference>
<reference key="18">
    <citation type="journal article" date="2013" name="Cell Res.">
        <title>Molecular basis for the selective and ABA-independent inhibition of PP2CA by PYL13.</title>
        <authorList>
            <person name="Li W."/>
            <person name="Wang L."/>
            <person name="Sheng X."/>
            <person name="Yan C."/>
            <person name="Zhou R."/>
            <person name="Hang J."/>
            <person name="Yin P."/>
            <person name="Yan N."/>
        </authorList>
    </citation>
    <scope>INTERACTION WITH PYL13</scope>
</reference>
<reference key="19">
    <citation type="journal article" date="2009" name="Nature">
        <title>A gate-latch-lock mechanism for hormone signalling by abscisic acid receptors.</title>
        <authorList>
            <person name="Melcher K."/>
            <person name="Ng L.-M."/>
            <person name="Zhou X.E."/>
            <person name="Soon F.-F."/>
            <person name="Xu Y."/>
            <person name="Suino-Powell K.M."/>
            <person name="Park S.-Y."/>
            <person name="Weiner J.J."/>
            <person name="Fujii H."/>
            <person name="Chinnusamy V."/>
            <person name="Kovach A."/>
            <person name="Li J."/>
            <person name="Wang Y."/>
            <person name="Li J."/>
            <person name="Peterson F.C."/>
            <person name="Jensen D.R."/>
            <person name="Yong E.-L."/>
            <person name="Volkman B.F."/>
            <person name="Cutler S.R."/>
            <person name="Zhu J.-K."/>
            <person name="Xu H.E."/>
        </authorList>
    </citation>
    <scope>X-RAY CRYSTALLOGRAPHY (1.95 ANGSTROMS) OF 186-506 IN COMPLEX WITH MAGNESIUM; ABSCISIC ACID AND PYL2</scope>
    <scope>INTERACTION WITH PYR1; PYL1; PYL2; PYL3; PYL4; PYL5 AND PYL6</scope>
    <scope>LOCK SITE</scope>
</reference>
<reference key="20">
    <citation type="journal article" date="2011" name="Mol. Cell">
        <title>The molecular basis of ABA-independent inhibition of PP2Cs by a subclass of PYL proteins.</title>
        <authorList>
            <person name="Hao Q."/>
            <person name="Yin P."/>
            <person name="Li W."/>
            <person name="Wang L."/>
            <person name="Yan C."/>
            <person name="Lin Z."/>
            <person name="Wu J.Z."/>
            <person name="Wang J."/>
            <person name="Yan S.F."/>
            <person name="Yan N."/>
        </authorList>
    </citation>
    <scope>X-RAY CRYSTALLOGRAPHY (2.11 ANGSTROMS) OF 172-511 IN COMPLEX WITH MAGNESIUM</scope>
    <scope>INTERACTION WITH PYL10</scope>
</reference>
<organism>
    <name type="scientific">Arabidopsis thaliana</name>
    <name type="common">Mouse-ear cress</name>
    <dbReference type="NCBI Taxonomy" id="3702"/>
    <lineage>
        <taxon>Eukaryota</taxon>
        <taxon>Viridiplantae</taxon>
        <taxon>Streptophyta</taxon>
        <taxon>Embryophyta</taxon>
        <taxon>Tracheophyta</taxon>
        <taxon>Spermatophyta</taxon>
        <taxon>Magnoliopsida</taxon>
        <taxon>eudicotyledons</taxon>
        <taxon>Gunneridae</taxon>
        <taxon>Pentapetalae</taxon>
        <taxon>rosids</taxon>
        <taxon>malvids</taxon>
        <taxon>Brassicales</taxon>
        <taxon>Brassicaceae</taxon>
        <taxon>Camelineae</taxon>
        <taxon>Arabidopsis</taxon>
    </lineage>
</organism>
<name>P2C16_ARATH</name>
<gene>
    <name type="primary">HAB1</name>
    <name type="synonym">P2C-HA</name>
    <name type="ordered locus">At1g72770</name>
    <name type="ORF">F28P22.4</name>
</gene>
<proteinExistence type="evidence at protein level"/>
<protein>
    <recommendedName>
        <fullName>Protein phosphatase 2C 16</fullName>
        <shortName>AtPP2C16</shortName>
        <ecNumber>3.1.3.16</ecNumber>
    </recommendedName>
    <alternativeName>
        <fullName>AtP2C-HA</fullName>
    </alternativeName>
    <alternativeName>
        <fullName>Protein HYPERSENSITIVE TO ABA 1</fullName>
    </alternativeName>
    <alternativeName>
        <fullName>Protein phosphatase 2C HAB1</fullName>
        <shortName>PP2C HAB1</shortName>
    </alternativeName>
</protein>
<evidence type="ECO:0000250" key="1"/>
<evidence type="ECO:0000255" key="2"/>
<evidence type="ECO:0000255" key="3">
    <source>
        <dbReference type="PROSITE-ProRule" id="PRU01082"/>
    </source>
</evidence>
<evidence type="ECO:0000269" key="4">
    <source>
    </source>
</evidence>
<evidence type="ECO:0000269" key="5">
    <source>
    </source>
</evidence>
<evidence type="ECO:0000269" key="6">
    <source>
    </source>
</evidence>
<evidence type="ECO:0000269" key="7">
    <source>
    </source>
</evidence>
<evidence type="ECO:0000269" key="8">
    <source>
    </source>
</evidence>
<evidence type="ECO:0000269" key="9">
    <source>
    </source>
</evidence>
<evidence type="ECO:0000269" key="10">
    <source>
    </source>
</evidence>
<evidence type="ECO:0000269" key="11">
    <source>
    </source>
</evidence>
<evidence type="ECO:0000269" key="12">
    <source>
    </source>
</evidence>
<evidence type="ECO:0000269" key="13">
    <source>
    </source>
</evidence>
<evidence type="ECO:0000269" key="14">
    <source>
    </source>
</evidence>
<evidence type="ECO:0000269" key="15">
    <source>
    </source>
</evidence>
<evidence type="ECO:0000269" key="16">
    <source>
    </source>
</evidence>
<evidence type="ECO:0000303" key="17">
    <source ref="5"/>
</evidence>
<evidence type="ECO:0000305" key="18"/>
<evidence type="ECO:0007744" key="19">
    <source>
        <dbReference type="PDB" id="3KB3"/>
    </source>
</evidence>
<evidence type="ECO:0007744" key="20">
    <source>
        <dbReference type="PDB" id="3NMT"/>
    </source>
</evidence>
<evidence type="ECO:0007744" key="21">
    <source>
        <dbReference type="PDB" id="3QN1"/>
    </source>
</evidence>
<evidence type="ECO:0007744" key="22">
    <source>
        <dbReference type="PDB" id="3RT0"/>
    </source>
</evidence>
<evidence type="ECO:0007744" key="23">
    <source>
        <dbReference type="PDB" id="3UJG"/>
    </source>
</evidence>
<evidence type="ECO:0007744" key="24">
    <source>
        <dbReference type="PDB" id="3ZVU"/>
    </source>
</evidence>
<evidence type="ECO:0007744" key="25">
    <source>
        <dbReference type="PDB" id="4LA7"/>
    </source>
</evidence>
<evidence type="ECO:0007744" key="26">
    <source>
        <dbReference type="PDB" id="4LG5"/>
    </source>
</evidence>
<evidence type="ECO:0007744" key="27">
    <source>
        <dbReference type="PDB" id="4LGA"/>
    </source>
</evidence>
<evidence type="ECO:0007744" key="28">
    <source>
        <dbReference type="PDB" id="4WVO"/>
    </source>
</evidence>
<evidence type="ECO:0007829" key="29">
    <source>
        <dbReference type="PDB" id="3RT0"/>
    </source>
</evidence>
<evidence type="ECO:0007829" key="30">
    <source>
        <dbReference type="PDB" id="4LA7"/>
    </source>
</evidence>
<evidence type="ECO:0007829" key="31">
    <source>
        <dbReference type="PDB" id="5VRO"/>
    </source>
</evidence>
<evidence type="ECO:0007829" key="32">
    <source>
        <dbReference type="PDB" id="5VSR"/>
    </source>
</evidence>
<evidence type="ECO:0007829" key="33">
    <source>
        <dbReference type="PDB" id="8AYA"/>
    </source>
</evidence>
<sequence length="511" mass="55744">MEEMTPAVAMTLSLAANTMCESSPVEITQLKNVTDAADLLSDSENQSFCNGGTECTMEDVSELEEVGEQDLLKTLSDTRSGSSNVFDEDDVLSVVEDNSAVISEGLLVVDAGSELSLSNTAMEIDNGRVLATAIIVGESSIEQVPTAEVLIAGVNQDTNTSEVVIRLPDENSNHLVKGRSVYELDCIPLWGTVSIQGNRSEMEDAFAVSPHFLKLPIKMLMGDHEGMSPSLTHLTGHFFGVYDGHGGHKVADYCRDRLHFALAEEIERIKDELCKRNTGEGRQVQWDKVFTSCFLTVDGEIEGKIGRAVVGSSDKVLEAVASETVGSTAVVALVCSSHIVVSNCGDSRAVLFRGKEAMPLSVDHKPDREDEYARIENAGGKVIQWQGARVFGVLAMSRSIGDRYLKPYVIPEPEVTFMPRSREDECLILASDGLWDVMNNQEVCEIARRRILMWHKKNGAPPLAERGKGIDPACQAAADYLSMLALQKGSKDNISIIVIDLKAQRKFKTRT</sequence>
<keyword id="KW-0002">3D-structure</keyword>
<keyword id="KW-0938">Abscisic acid signaling pathway</keyword>
<keyword id="KW-0025">Alternative splicing</keyword>
<keyword id="KW-0963">Cytoplasm</keyword>
<keyword id="KW-0378">Hydrolase</keyword>
<keyword id="KW-0460">Magnesium</keyword>
<keyword id="KW-0464">Manganese</keyword>
<keyword id="KW-0479">Metal-binding</keyword>
<keyword id="KW-0539">Nucleus</keyword>
<keyword id="KW-0904">Protein phosphatase</keyword>
<keyword id="KW-1185">Reference proteome</keyword>
<keyword id="KW-0732">Signal</keyword>
<comment type="function">
    <text evidence="4 6 7 9">Key component and repressor of the abscisic acid (ABA) signaling pathway that regulates numerous ABA responses, such as stomatal closure, seed germination and inhibition of vegetative growth. Confers enhanced sensitivity to drought.</text>
</comment>
<comment type="catalytic activity">
    <reaction>
        <text>O-phospho-L-seryl-[protein] + H2O = L-seryl-[protein] + phosphate</text>
        <dbReference type="Rhea" id="RHEA:20629"/>
        <dbReference type="Rhea" id="RHEA-COMP:9863"/>
        <dbReference type="Rhea" id="RHEA-COMP:11604"/>
        <dbReference type="ChEBI" id="CHEBI:15377"/>
        <dbReference type="ChEBI" id="CHEBI:29999"/>
        <dbReference type="ChEBI" id="CHEBI:43474"/>
        <dbReference type="ChEBI" id="CHEBI:83421"/>
        <dbReference type="EC" id="3.1.3.16"/>
    </reaction>
</comment>
<comment type="catalytic activity">
    <reaction>
        <text>O-phospho-L-threonyl-[protein] + H2O = L-threonyl-[protein] + phosphate</text>
        <dbReference type="Rhea" id="RHEA:47004"/>
        <dbReference type="Rhea" id="RHEA-COMP:11060"/>
        <dbReference type="Rhea" id="RHEA-COMP:11605"/>
        <dbReference type="ChEBI" id="CHEBI:15377"/>
        <dbReference type="ChEBI" id="CHEBI:30013"/>
        <dbReference type="ChEBI" id="CHEBI:43474"/>
        <dbReference type="ChEBI" id="CHEBI:61977"/>
        <dbReference type="EC" id="3.1.3.16"/>
    </reaction>
</comment>
<comment type="cofactor">
    <cofactor evidence="13 14">
        <name>Mg(2+)</name>
        <dbReference type="ChEBI" id="CHEBI:18420"/>
    </cofactor>
    <cofactor evidence="1">
        <name>Mn(2+)</name>
        <dbReference type="ChEBI" id="CHEBI:29035"/>
    </cofactor>
    <text evidence="1">Binds 2 magnesium or manganese ions per subunit.</text>
</comment>
<comment type="activity regulation">
    <text evidence="10">Repressed by PYR/PYL/RCAR ABA receptors in an ABA-dependent manner.</text>
</comment>
<comment type="subunit">
    <text evidence="9 10 11 12 13 14 15">Interacts with SWI3B (via N-terminus). Interacts with ABA-bounded PYR1, PYL1, PYL2, PYL3, PYL4, PYL5, PYL6, PYL8 and PYL9, and with free PYL2, PYL3, PYL4, PYL10 and PYL13.</text>
</comment>
<comment type="interaction">
    <interactant intactId="EBI-2309302">
        <id>Q9CAJ0</id>
    </interactant>
    <interactant intactId="EBI-2363104">
        <id>Q8VZS8</id>
        <label>PYL1</label>
    </interactant>
    <organismsDiffer>false</organismsDiffer>
    <experiments>7</experiments>
</comment>
<comment type="interaction">
    <interactant intactId="EBI-2309302">
        <id>Q9CAJ0</id>
    </interactant>
    <interactant intactId="EBI-2363213">
        <id>Q8H1R0</id>
        <label>PYL10</label>
    </interactant>
    <organismsDiffer>false</organismsDiffer>
    <experiments>4</experiments>
</comment>
<comment type="interaction">
    <interactant intactId="EBI-2309302">
        <id>Q9CAJ0</id>
    </interactant>
    <interactant intactId="EBI-2363233">
        <id>Q9FJ50</id>
        <label>PYL11</label>
    </interactant>
    <organismsDiffer>false</organismsDiffer>
    <experiments>4</experiments>
</comment>
<comment type="interaction">
    <interactant intactId="EBI-2309302">
        <id>Q9CAJ0</id>
    </interactant>
    <interactant intactId="EBI-2363244">
        <id>Q9FJ49</id>
        <label>PYL12</label>
    </interactant>
    <organismsDiffer>false</organismsDiffer>
    <experiments>4</experiments>
</comment>
<comment type="interaction">
    <interactant intactId="EBI-2309302">
        <id>Q9CAJ0</id>
    </interactant>
    <interactant intactId="EBI-2363125">
        <id>O80992</id>
        <label>PYL2</label>
    </interactant>
    <organismsDiffer>false</organismsDiffer>
    <experiments>10</experiments>
</comment>
<comment type="interaction">
    <interactant intactId="EBI-2309302">
        <id>Q9CAJ0</id>
    </interactant>
    <interactant intactId="EBI-2363144">
        <id>Q9SSM7</id>
        <label>PYL3</label>
    </interactant>
    <organismsDiffer>false</organismsDiffer>
    <experiments>10</experiments>
</comment>
<comment type="interaction">
    <interactant intactId="EBI-2309302">
        <id>Q9CAJ0</id>
    </interactant>
    <interactant intactId="EBI-2349683">
        <id>O80920</id>
        <label>PYL4</label>
    </interactant>
    <organismsDiffer>false</organismsDiffer>
    <experiments>8</experiments>
</comment>
<comment type="interaction">
    <interactant intactId="EBI-2309302">
        <id>Q9CAJ0</id>
    </interactant>
    <interactant intactId="EBI-2363181">
        <id>Q9FLB1</id>
        <label>PYL5</label>
    </interactant>
    <organismsDiffer>false</organismsDiffer>
    <experiments>11</experiments>
</comment>
<comment type="interaction">
    <interactant intactId="EBI-2309302">
        <id>Q9CAJ0</id>
    </interactant>
    <interactant intactId="EBI-2363192">
        <id>Q8S8E3</id>
        <label>PYL6</label>
    </interactant>
    <organismsDiffer>false</organismsDiffer>
    <experiments>9</experiments>
</comment>
<comment type="interaction">
    <interactant intactId="EBI-2309302">
        <id>Q9CAJ0</id>
    </interactant>
    <interactant intactId="EBI-2363203">
        <id>Q1ECF1</id>
        <label>PYL7</label>
    </interactant>
    <organismsDiffer>false</organismsDiffer>
    <experiments>4</experiments>
</comment>
<comment type="interaction">
    <interactant intactId="EBI-2309302">
        <id>Q9CAJ0</id>
    </interactant>
    <interactant intactId="EBI-2429535">
        <id>Q9FGM1</id>
        <label>PYL8</label>
    </interactant>
    <organismsDiffer>false</organismsDiffer>
    <experiments>7</experiments>
</comment>
<comment type="interaction">
    <interactant intactId="EBI-2309302">
        <id>Q9CAJ0</id>
    </interactant>
    <interactant intactId="EBI-2349513">
        <id>Q84MC7</id>
        <label>PYL9</label>
    </interactant>
    <organismsDiffer>false</organismsDiffer>
    <experiments>5</experiments>
</comment>
<comment type="interaction">
    <interactant intactId="EBI-2309302">
        <id>Q9CAJ0</id>
    </interactant>
    <interactant intactId="EBI-2349590">
        <id>O49686</id>
        <label>PYR1</label>
    </interactant>
    <organismsDiffer>false</organismsDiffer>
    <experiments>17</experiments>
</comment>
<comment type="interaction">
    <interactant intactId="EBI-2309302">
        <id>Q9CAJ0</id>
    </interactant>
    <interactant intactId="EBI-2363308">
        <id>Q39192</id>
        <label>SRK2D</label>
    </interactant>
    <organismsDiffer>false</organismsDiffer>
    <experiments>2</experiments>
</comment>
<comment type="interaction">
    <interactant intactId="EBI-2309302">
        <id>Q9CAJ0</id>
    </interactant>
    <interactant intactId="EBI-782514">
        <id>Q940H6</id>
        <label>SRK2E</label>
    </interactant>
    <organismsDiffer>false</organismsDiffer>
    <experiments>5</experiments>
</comment>
<comment type="interaction">
    <interactant intactId="EBI-2309302">
        <id>Q9CAJ0</id>
    </interactant>
    <interactant intactId="EBI-2620383">
        <id>Q39193</id>
        <label>SRK2I</label>
    </interactant>
    <organismsDiffer>false</organismsDiffer>
    <experiments>2</experiments>
</comment>
<comment type="interaction">
    <interactant intactId="EBI-2309302">
        <id>Q9CAJ0</id>
    </interactant>
    <interactant intactId="EBI-1102271">
        <id>Q84JG2</id>
        <label>SWI3B</label>
    </interactant>
    <organismsDiffer>false</organismsDiffer>
    <experiments>4</experiments>
</comment>
<comment type="subcellular location">
    <subcellularLocation>
        <location evidence="9">Cytoplasm</location>
    </subcellularLocation>
    <subcellularLocation>
        <location evidence="9">Nucleus</location>
    </subcellularLocation>
    <text>Mainly cytoplasmic.</text>
</comment>
<comment type="alternative products">
    <event type="alternative splicing"/>
    <isoform>
        <id>Q9CAJ0-1</id>
        <name>1</name>
        <sequence type="displayed"/>
    </isoform>
    <isoform>
        <id>Q9CAJ0-2</id>
        <name>2</name>
        <sequence type="described" ref="VSP_034844 VSP_034845"/>
    </isoform>
</comment>
<comment type="tissue specificity">
    <text evidence="4 5 16">Expressed in seeds, roots, stems, leaves and flowers, especially in meristematic tissues, guard cells, embryo and siliques.</text>
</comment>
<comment type="induction">
    <text evidence="4 5 8 16">Repressed by MYB44. Induced by ABA.</text>
</comment>
<comment type="domain">
    <text>The 'lock' site stabilizes the complex made of PP2C, ABA and PYR/PYL/RCAR receptor by keeping receptor 'gate' and 'latch' loops in closed positions.</text>
</comment>
<comment type="similarity">
    <text evidence="18">Belongs to the PP2C family.</text>
</comment>
<comment type="sequence caution" evidence="18">
    <conflict type="erroneous initiation">
        <sequence resource="EMBL-CDS" id="BAH56780"/>
    </conflict>
    <text>Truncated N-terminus.</text>
</comment>
<accession>Q9CAJ0</accession>
<accession>C0Z251</accession>
<accession>O81709</accession>
<accession>Q0WLM7</accession>
<dbReference type="EC" id="3.1.3.16"/>
<dbReference type="EMBL" id="AJ003119">
    <property type="protein sequence ID" value="CAA05875.1"/>
    <property type="molecule type" value="Genomic_DNA"/>
</dbReference>
<dbReference type="EMBL" id="AC010926">
    <property type="protein sequence ID" value="AAG51849.1"/>
    <property type="molecule type" value="Genomic_DNA"/>
</dbReference>
<dbReference type="EMBL" id="CP002684">
    <property type="protein sequence ID" value="AEE35370.1"/>
    <property type="molecule type" value="Genomic_DNA"/>
</dbReference>
<dbReference type="EMBL" id="CP002684">
    <property type="protein sequence ID" value="AEE35371.1"/>
    <property type="molecule type" value="Genomic_DNA"/>
</dbReference>
<dbReference type="EMBL" id="CP002684">
    <property type="protein sequence ID" value="AEE35372.1"/>
    <property type="molecule type" value="Genomic_DNA"/>
</dbReference>
<dbReference type="EMBL" id="CP002684">
    <property type="protein sequence ID" value="ANM58361.1"/>
    <property type="molecule type" value="Genomic_DNA"/>
</dbReference>
<dbReference type="EMBL" id="CP002684">
    <property type="protein sequence ID" value="ANM58362.1"/>
    <property type="molecule type" value="Genomic_DNA"/>
</dbReference>
<dbReference type="EMBL" id="BT015409">
    <property type="protein sequence ID" value="AAU05532.1"/>
    <property type="molecule type" value="mRNA"/>
</dbReference>
<dbReference type="EMBL" id="AK230171">
    <property type="protein sequence ID" value="BAF01980.1"/>
    <property type="molecule type" value="mRNA"/>
</dbReference>
<dbReference type="EMBL" id="AK318665">
    <property type="protein sequence ID" value="BAH56780.1"/>
    <property type="status" value="ALT_INIT"/>
    <property type="molecule type" value="mRNA"/>
</dbReference>
<dbReference type="PIR" id="F96752">
    <property type="entry name" value="F96752"/>
</dbReference>
<dbReference type="RefSeq" id="NP_001077815.1">
    <molecule id="Q9CAJ0-2"/>
    <property type="nucleotide sequence ID" value="NM_001084346.3"/>
</dbReference>
<dbReference type="RefSeq" id="NP_001185385.1">
    <molecule id="Q9CAJ0-1"/>
    <property type="nucleotide sequence ID" value="NM_001198456.1"/>
</dbReference>
<dbReference type="RefSeq" id="NP_001320804.1">
    <molecule id="Q9CAJ0-1"/>
    <property type="nucleotide sequence ID" value="NM_001334550.1"/>
</dbReference>
<dbReference type="RefSeq" id="NP_001320805.1">
    <molecule id="Q9CAJ0-2"/>
    <property type="nucleotide sequence ID" value="NM_001334551.1"/>
</dbReference>
<dbReference type="RefSeq" id="NP_177421.1">
    <molecule id="Q9CAJ0-1"/>
    <property type="nucleotide sequence ID" value="NM_105936.4"/>
</dbReference>
<dbReference type="PDB" id="3KB3">
    <property type="method" value="X-ray"/>
    <property type="resolution" value="1.95 A"/>
    <property type="chains" value="B=186-506"/>
</dbReference>
<dbReference type="PDB" id="3NMT">
    <property type="method" value="X-ray"/>
    <property type="resolution" value="2.56 A"/>
    <property type="chains" value="B=172-511"/>
</dbReference>
<dbReference type="PDB" id="3QN1">
    <property type="method" value="X-ray"/>
    <property type="resolution" value="1.80 A"/>
    <property type="chains" value="B=178-511"/>
</dbReference>
<dbReference type="PDB" id="3RT0">
    <property type="method" value="X-ray"/>
    <property type="resolution" value="2.11 A"/>
    <property type="chains" value="A/B=172-511"/>
</dbReference>
<dbReference type="PDB" id="3UJG">
    <property type="method" value="X-ray"/>
    <property type="resolution" value="2.60 A"/>
    <property type="chains" value="B=172-511"/>
</dbReference>
<dbReference type="PDB" id="3ZVU">
    <property type="method" value="X-ray"/>
    <property type="resolution" value="2.10 A"/>
    <property type="chains" value="B=178-511"/>
</dbReference>
<dbReference type="PDB" id="4DS8">
    <property type="method" value="X-ray"/>
    <property type="resolution" value="2.21 A"/>
    <property type="chains" value="B=169-511"/>
</dbReference>
<dbReference type="PDB" id="4LA7">
    <property type="method" value="X-ray"/>
    <property type="resolution" value="1.98 A"/>
    <property type="chains" value="B=178-505"/>
</dbReference>
<dbReference type="PDB" id="4LG5">
    <property type="method" value="X-ray"/>
    <property type="resolution" value="2.88 A"/>
    <property type="chains" value="B=172-511"/>
</dbReference>
<dbReference type="PDB" id="4LGA">
    <property type="method" value="X-ray"/>
    <property type="resolution" value="2.70 A"/>
    <property type="chains" value="B=172-511"/>
</dbReference>
<dbReference type="PDB" id="4LGB">
    <property type="method" value="X-ray"/>
    <property type="resolution" value="3.15 A"/>
    <property type="chains" value="B=172-511"/>
</dbReference>
<dbReference type="PDB" id="4WVO">
    <property type="method" value="X-ray"/>
    <property type="resolution" value="2.25 A"/>
    <property type="chains" value="B=178-505"/>
</dbReference>
<dbReference type="PDB" id="5JO1">
    <property type="method" value="X-ray"/>
    <property type="resolution" value="2.30 A"/>
    <property type="chains" value="B=172-506"/>
</dbReference>
<dbReference type="PDB" id="5JO2">
    <property type="method" value="X-ray"/>
    <property type="resolution" value="2.42 A"/>
    <property type="chains" value="B=172-506"/>
</dbReference>
<dbReference type="PDB" id="5MN0">
    <property type="method" value="X-ray"/>
    <property type="resolution" value="2.00 A"/>
    <property type="chains" value="B=179-511"/>
</dbReference>
<dbReference type="PDB" id="5OR2">
    <property type="method" value="X-ray"/>
    <property type="resolution" value="2.50 A"/>
    <property type="chains" value="B=178-511"/>
</dbReference>
<dbReference type="PDB" id="5OR6">
    <property type="method" value="X-ray"/>
    <property type="resolution" value="2.40 A"/>
    <property type="chains" value="B=178-511"/>
</dbReference>
<dbReference type="PDB" id="5VR7">
    <property type="method" value="X-ray"/>
    <property type="resolution" value="2.61 A"/>
    <property type="chains" value="B=172-511"/>
</dbReference>
<dbReference type="PDB" id="5VRO">
    <property type="method" value="X-ray"/>
    <property type="resolution" value="2.26 A"/>
    <property type="chains" value="B=172-511"/>
</dbReference>
<dbReference type="PDB" id="5VS5">
    <property type="method" value="X-ray"/>
    <property type="resolution" value="2.80 A"/>
    <property type="chains" value="B=172-511"/>
</dbReference>
<dbReference type="PDB" id="5VSQ">
    <property type="method" value="X-ray"/>
    <property type="resolution" value="2.62 A"/>
    <property type="chains" value="B=172-511"/>
</dbReference>
<dbReference type="PDB" id="5VSR">
    <property type="method" value="X-ray"/>
    <property type="resolution" value="2.62 A"/>
    <property type="chains" value="B=172-511"/>
</dbReference>
<dbReference type="PDB" id="5VT7">
    <property type="method" value="X-ray"/>
    <property type="resolution" value="2.62 A"/>
    <property type="chains" value="B=172-511"/>
</dbReference>
<dbReference type="PDB" id="6ZUC">
    <property type="method" value="X-ray"/>
    <property type="resolution" value="2.37 A"/>
    <property type="chains" value="B=179-505"/>
</dbReference>
<dbReference type="PDB" id="7AVW">
    <property type="method" value="X-ray"/>
    <property type="resolution" value="2.10 A"/>
    <property type="chains" value="B=179-511"/>
</dbReference>
<dbReference type="PDB" id="7MWN">
    <property type="method" value="X-ray"/>
    <property type="resolution" value="1.90 A"/>
    <property type="chains" value="B=179-511"/>
</dbReference>
<dbReference type="PDB" id="8AY3">
    <property type="method" value="X-ray"/>
    <property type="resolution" value="1.90 A"/>
    <property type="chains" value="B=179-511"/>
</dbReference>
<dbReference type="PDB" id="8AY6">
    <property type="method" value="X-ray"/>
    <property type="resolution" value="1.84 A"/>
    <property type="chains" value="B=179-511"/>
</dbReference>
<dbReference type="PDB" id="8AY7">
    <property type="method" value="X-ray"/>
    <property type="resolution" value="2.13 A"/>
    <property type="chains" value="B=179-511"/>
</dbReference>
<dbReference type="PDB" id="8AY8">
    <property type="method" value="X-ray"/>
    <property type="resolution" value="1.78 A"/>
    <property type="chains" value="B=179-511"/>
</dbReference>
<dbReference type="PDB" id="8AY9">
    <property type="method" value="X-ray"/>
    <property type="resolution" value="2.28 A"/>
    <property type="chains" value="B=179-511"/>
</dbReference>
<dbReference type="PDB" id="8AYA">
    <property type="method" value="X-ray"/>
    <property type="resolution" value="1.74 A"/>
    <property type="chains" value="B=179-511"/>
</dbReference>
<dbReference type="PDB" id="8EY0">
    <property type="method" value="X-ray"/>
    <property type="resolution" value="2.40 A"/>
    <property type="chains" value="B=179-511"/>
</dbReference>
<dbReference type="PDBsum" id="3KB3"/>
<dbReference type="PDBsum" id="3NMT"/>
<dbReference type="PDBsum" id="3QN1"/>
<dbReference type="PDBsum" id="3RT0"/>
<dbReference type="PDBsum" id="3UJG"/>
<dbReference type="PDBsum" id="3ZVU"/>
<dbReference type="PDBsum" id="4DS8"/>
<dbReference type="PDBsum" id="4LA7"/>
<dbReference type="PDBsum" id="4LG5"/>
<dbReference type="PDBsum" id="4LGA"/>
<dbReference type="PDBsum" id="4LGB"/>
<dbReference type="PDBsum" id="4WVO"/>
<dbReference type="PDBsum" id="5JO1"/>
<dbReference type="PDBsum" id="5JO2"/>
<dbReference type="PDBsum" id="5MN0"/>
<dbReference type="PDBsum" id="5OR2"/>
<dbReference type="PDBsum" id="5OR6"/>
<dbReference type="PDBsum" id="5VR7"/>
<dbReference type="PDBsum" id="5VRO"/>
<dbReference type="PDBsum" id="5VS5"/>
<dbReference type="PDBsum" id="5VSQ"/>
<dbReference type="PDBsum" id="5VSR"/>
<dbReference type="PDBsum" id="5VT7"/>
<dbReference type="PDBsum" id="6ZUC"/>
<dbReference type="PDBsum" id="7AVW"/>
<dbReference type="PDBsum" id="7MWN"/>
<dbReference type="PDBsum" id="8AY3"/>
<dbReference type="PDBsum" id="8AY6"/>
<dbReference type="PDBsum" id="8AY7"/>
<dbReference type="PDBsum" id="8AY8"/>
<dbReference type="PDBsum" id="8AY9"/>
<dbReference type="PDBsum" id="8AYA"/>
<dbReference type="PDBsum" id="8EY0"/>
<dbReference type="SMR" id="Q9CAJ0"/>
<dbReference type="BioGRID" id="28828">
    <property type="interactions" value="25"/>
</dbReference>
<dbReference type="DIP" id="DIP-48988N"/>
<dbReference type="FunCoup" id="Q9CAJ0">
    <property type="interactions" value="402"/>
</dbReference>
<dbReference type="IntAct" id="Q9CAJ0">
    <property type="interactions" value="22"/>
</dbReference>
<dbReference type="MINT" id="Q9CAJ0"/>
<dbReference type="STRING" id="3702.Q9CAJ0"/>
<dbReference type="BindingDB" id="Q9CAJ0"/>
<dbReference type="PaxDb" id="3702-AT1G72770.1"/>
<dbReference type="ProteomicsDB" id="248872">
    <molecule id="Q9CAJ0-1"/>
</dbReference>
<dbReference type="EnsemblPlants" id="AT1G72770.1">
    <molecule id="Q9CAJ0-1"/>
    <property type="protein sequence ID" value="AT1G72770.1"/>
    <property type="gene ID" value="AT1G72770"/>
</dbReference>
<dbReference type="EnsemblPlants" id="AT1G72770.2">
    <molecule id="Q9CAJ0-2"/>
    <property type="protein sequence ID" value="AT1G72770.2"/>
    <property type="gene ID" value="AT1G72770"/>
</dbReference>
<dbReference type="EnsemblPlants" id="AT1G72770.3">
    <molecule id="Q9CAJ0-1"/>
    <property type="protein sequence ID" value="AT1G72770.3"/>
    <property type="gene ID" value="AT1G72770"/>
</dbReference>
<dbReference type="EnsemblPlants" id="AT1G72770.4">
    <molecule id="Q9CAJ0-1"/>
    <property type="protein sequence ID" value="AT1G72770.4"/>
    <property type="gene ID" value="AT1G72770"/>
</dbReference>
<dbReference type="EnsemblPlants" id="AT1G72770.5">
    <molecule id="Q9CAJ0-2"/>
    <property type="protein sequence ID" value="AT1G72770.5"/>
    <property type="gene ID" value="AT1G72770"/>
</dbReference>
<dbReference type="GeneID" id="843609"/>
<dbReference type="Gramene" id="AT1G72770.1">
    <molecule id="Q9CAJ0-1"/>
    <property type="protein sequence ID" value="AT1G72770.1"/>
    <property type="gene ID" value="AT1G72770"/>
</dbReference>
<dbReference type="Gramene" id="AT1G72770.2">
    <molecule id="Q9CAJ0-2"/>
    <property type="protein sequence ID" value="AT1G72770.2"/>
    <property type="gene ID" value="AT1G72770"/>
</dbReference>
<dbReference type="Gramene" id="AT1G72770.3">
    <molecule id="Q9CAJ0-1"/>
    <property type="protein sequence ID" value="AT1G72770.3"/>
    <property type="gene ID" value="AT1G72770"/>
</dbReference>
<dbReference type="Gramene" id="AT1G72770.4">
    <molecule id="Q9CAJ0-1"/>
    <property type="protein sequence ID" value="AT1G72770.4"/>
    <property type="gene ID" value="AT1G72770"/>
</dbReference>
<dbReference type="Gramene" id="AT1G72770.5">
    <molecule id="Q9CAJ0-2"/>
    <property type="protein sequence ID" value="AT1G72770.5"/>
    <property type="gene ID" value="AT1G72770"/>
</dbReference>
<dbReference type="KEGG" id="ath:AT1G72770"/>
<dbReference type="Araport" id="AT1G72770"/>
<dbReference type="TAIR" id="AT1G72770">
    <property type="gene designation" value="HAB1"/>
</dbReference>
<dbReference type="eggNOG" id="KOG0698">
    <property type="taxonomic scope" value="Eukaryota"/>
</dbReference>
<dbReference type="HOGENOM" id="CLU_013173_20_5_1"/>
<dbReference type="InParanoid" id="Q9CAJ0"/>
<dbReference type="OMA" id="QEVCEIA"/>
<dbReference type="OrthoDB" id="10264738at2759"/>
<dbReference type="PhylomeDB" id="Q9CAJ0"/>
<dbReference type="EvolutionaryTrace" id="Q9CAJ0"/>
<dbReference type="PRO" id="PR:Q9CAJ0"/>
<dbReference type="Proteomes" id="UP000006548">
    <property type="component" value="Chromosome 1"/>
</dbReference>
<dbReference type="ExpressionAtlas" id="Q9CAJ0">
    <property type="expression patterns" value="baseline and differential"/>
</dbReference>
<dbReference type="GO" id="GO:0005737">
    <property type="term" value="C:cytoplasm"/>
    <property type="evidence" value="ECO:0007669"/>
    <property type="project" value="UniProtKB-SubCell"/>
</dbReference>
<dbReference type="GO" id="GO:0005634">
    <property type="term" value="C:nucleus"/>
    <property type="evidence" value="ECO:0007669"/>
    <property type="project" value="UniProtKB-SubCell"/>
</dbReference>
<dbReference type="GO" id="GO:0046872">
    <property type="term" value="F:metal ion binding"/>
    <property type="evidence" value="ECO:0007669"/>
    <property type="project" value="UniProtKB-KW"/>
</dbReference>
<dbReference type="GO" id="GO:0004722">
    <property type="term" value="F:protein serine/threonine phosphatase activity"/>
    <property type="evidence" value="ECO:0000314"/>
    <property type="project" value="TAIR"/>
</dbReference>
<dbReference type="GO" id="GO:0009738">
    <property type="term" value="P:abscisic acid-activated signaling pathway"/>
    <property type="evidence" value="ECO:0007669"/>
    <property type="project" value="UniProtKB-KW"/>
</dbReference>
<dbReference type="CDD" id="cd00143">
    <property type="entry name" value="PP2Cc"/>
    <property type="match status" value="1"/>
</dbReference>
<dbReference type="FunFam" id="3.60.40.10:FF:000025">
    <property type="entry name" value="Protein phosphatase 2C 16"/>
    <property type="match status" value="1"/>
</dbReference>
<dbReference type="Gene3D" id="3.60.40.10">
    <property type="entry name" value="PPM-type phosphatase domain"/>
    <property type="match status" value="1"/>
</dbReference>
<dbReference type="InterPro" id="IPR015655">
    <property type="entry name" value="PP2C"/>
</dbReference>
<dbReference type="InterPro" id="IPR000222">
    <property type="entry name" value="PP2C_BS"/>
</dbReference>
<dbReference type="InterPro" id="IPR036457">
    <property type="entry name" value="PPM-type-like_dom_sf"/>
</dbReference>
<dbReference type="InterPro" id="IPR001932">
    <property type="entry name" value="PPM-type_phosphatase-like_dom"/>
</dbReference>
<dbReference type="PANTHER" id="PTHR47992">
    <property type="entry name" value="PROTEIN PHOSPHATASE"/>
    <property type="match status" value="1"/>
</dbReference>
<dbReference type="Pfam" id="PF00481">
    <property type="entry name" value="PP2C"/>
    <property type="match status" value="1"/>
</dbReference>
<dbReference type="SMART" id="SM00332">
    <property type="entry name" value="PP2Cc"/>
    <property type="match status" value="1"/>
</dbReference>
<dbReference type="SUPFAM" id="SSF81606">
    <property type="entry name" value="PP2C-like"/>
    <property type="match status" value="1"/>
</dbReference>
<dbReference type="PROSITE" id="PS01032">
    <property type="entry name" value="PPM_1"/>
    <property type="match status" value="1"/>
</dbReference>
<dbReference type="PROSITE" id="PS51746">
    <property type="entry name" value="PPM_2"/>
    <property type="match status" value="1"/>
</dbReference>